<evidence type="ECO:0000250" key="1">
    <source>
        <dbReference type="UniProtKB" id="Q8N128"/>
    </source>
</evidence>
<evidence type="ECO:0000255" key="2"/>
<evidence type="ECO:0000256" key="3">
    <source>
        <dbReference type="SAM" id="MobiDB-lite"/>
    </source>
</evidence>
<evidence type="ECO:0000305" key="4"/>
<proteinExistence type="evidence at transcript level"/>
<protein>
    <recommendedName>
        <fullName>Protein FAM177A1</fullName>
    </recommendedName>
</protein>
<name>F177A_BOVIN</name>
<feature type="chain" id="PRO_0000351135" description="Protein FAM177A1">
    <location>
        <begin position="1"/>
        <end position="212"/>
    </location>
</feature>
<feature type="region of interest" description="Disordered" evidence="3">
    <location>
        <begin position="1"/>
        <end position="33"/>
    </location>
</feature>
<feature type="region of interest" description="Disordered" evidence="3">
    <location>
        <begin position="146"/>
        <end position="179"/>
    </location>
</feature>
<feature type="coiled-coil region" evidence="2">
    <location>
        <begin position="135"/>
        <end position="172"/>
    </location>
</feature>
<feature type="compositionally biased region" description="Basic and acidic residues" evidence="3">
    <location>
        <begin position="1"/>
        <end position="11"/>
    </location>
</feature>
<feature type="compositionally biased region" description="Low complexity" evidence="3">
    <location>
        <begin position="13"/>
        <end position="29"/>
    </location>
</feature>
<feature type="compositionally biased region" description="Polar residues" evidence="3">
    <location>
        <begin position="161"/>
        <end position="179"/>
    </location>
</feature>
<feature type="modified residue" description="N-acetylmethionine" evidence="1">
    <location>
        <position position="1"/>
    </location>
</feature>
<feature type="modified residue" description="Phosphoserine" evidence="1">
    <location>
        <position position="69"/>
    </location>
</feature>
<feature type="modified residue" description="Phosphothreonine" evidence="1">
    <location>
        <position position="70"/>
    </location>
</feature>
<sequence length="212" mass="23862">MEGEPASREEGEAVNASGAAAASAFRESAQQMSNERGFENVELGVIGKKKKVPRRVIHFVSGETMEEYSTDEDEVDSLEKKDVLPPVDPTKLTWGPYLWFHMLRAATSTLSVCDFLGEKIASVLGISTPKYQYAIDEYYRMKKEEEEEEEENRMSEEAERQYQQNKLQADSVVQSDQPETLASSSFVNLNFEMEGDCEVITESKQNPVSVPL</sequence>
<reference key="1">
    <citation type="submission" date="2007-06" db="EMBL/GenBank/DDBJ databases">
        <authorList>
            <consortium name="NIH - Mammalian Gene Collection (MGC) project"/>
        </authorList>
    </citation>
    <scope>NUCLEOTIDE SEQUENCE [LARGE SCALE MRNA]</scope>
    <source>
        <strain>Hereford</strain>
        <tissue>Fetal spinal cord</tissue>
    </source>
</reference>
<keyword id="KW-0007">Acetylation</keyword>
<keyword id="KW-0175">Coiled coil</keyword>
<keyword id="KW-0597">Phosphoprotein</keyword>
<keyword id="KW-1185">Reference proteome</keyword>
<accession>A6QLZ5</accession>
<comment type="similarity">
    <text evidence="4">Belongs to the FAM177 family.</text>
</comment>
<organism>
    <name type="scientific">Bos taurus</name>
    <name type="common">Bovine</name>
    <dbReference type="NCBI Taxonomy" id="9913"/>
    <lineage>
        <taxon>Eukaryota</taxon>
        <taxon>Metazoa</taxon>
        <taxon>Chordata</taxon>
        <taxon>Craniata</taxon>
        <taxon>Vertebrata</taxon>
        <taxon>Euteleostomi</taxon>
        <taxon>Mammalia</taxon>
        <taxon>Eutheria</taxon>
        <taxon>Laurasiatheria</taxon>
        <taxon>Artiodactyla</taxon>
        <taxon>Ruminantia</taxon>
        <taxon>Pecora</taxon>
        <taxon>Bovidae</taxon>
        <taxon>Bovinae</taxon>
        <taxon>Bos</taxon>
    </lineage>
</organism>
<dbReference type="EMBL" id="BC148141">
    <property type="protein sequence ID" value="AAI48142.1"/>
    <property type="molecule type" value="mRNA"/>
</dbReference>
<dbReference type="RefSeq" id="NP_001096799.1">
    <property type="nucleotide sequence ID" value="NM_001103329.2"/>
</dbReference>
<dbReference type="FunCoup" id="A6QLZ5">
    <property type="interactions" value="454"/>
</dbReference>
<dbReference type="STRING" id="9913.ENSBTAP00000012768"/>
<dbReference type="PaxDb" id="9913-ENSBTAP00000012768"/>
<dbReference type="Ensembl" id="ENSBTAT00000012768.5">
    <property type="protein sequence ID" value="ENSBTAP00000012768.4"/>
    <property type="gene ID" value="ENSBTAG00000009680.6"/>
</dbReference>
<dbReference type="GeneID" id="100125286"/>
<dbReference type="KEGG" id="bta:100125286"/>
<dbReference type="CTD" id="283635"/>
<dbReference type="VEuPathDB" id="HostDB:ENSBTAG00000009680"/>
<dbReference type="VGNC" id="VGNC:50064">
    <property type="gene designation" value="FAM177A1"/>
</dbReference>
<dbReference type="eggNOG" id="ENOG502RYW3">
    <property type="taxonomic scope" value="Eukaryota"/>
</dbReference>
<dbReference type="GeneTree" id="ENSGT00390000016736"/>
<dbReference type="HOGENOM" id="CLU_081605_0_0_1"/>
<dbReference type="InParanoid" id="A6QLZ5"/>
<dbReference type="OMA" id="NFESVEM"/>
<dbReference type="OrthoDB" id="45963at2759"/>
<dbReference type="TreeFam" id="TF326916"/>
<dbReference type="Proteomes" id="UP000009136">
    <property type="component" value="Chromosome 21"/>
</dbReference>
<dbReference type="Bgee" id="ENSBTAG00000009680">
    <property type="expression patterns" value="Expressed in olfactory segment of nasal mucosa and 107 other cell types or tissues"/>
</dbReference>
<dbReference type="InterPro" id="IPR028260">
    <property type="entry name" value="FAM177"/>
</dbReference>
<dbReference type="PANTHER" id="PTHR31206">
    <property type="entry name" value="LP10445P"/>
    <property type="match status" value="1"/>
</dbReference>
<dbReference type="PANTHER" id="PTHR31206:SF5">
    <property type="entry name" value="PROTEIN FAM177A1"/>
    <property type="match status" value="1"/>
</dbReference>
<dbReference type="Pfam" id="PF14774">
    <property type="entry name" value="FAM177"/>
    <property type="match status" value="1"/>
</dbReference>
<gene>
    <name type="primary">FAM177A1</name>
</gene>